<dbReference type="EC" id="1.1.1.85"/>
<dbReference type="EMBL" id="M37309">
    <property type="protein sequence ID" value="AAA35244.1"/>
    <property type="molecule type" value="Genomic_DNA"/>
</dbReference>
<dbReference type="EMBL" id="AF260230">
    <property type="protein sequence ID" value="AAF70314.1"/>
    <property type="molecule type" value="Genomic_DNA"/>
</dbReference>
<dbReference type="EMBL" id="CR382129">
    <property type="protein sequence ID" value="CAG81579.1"/>
    <property type="status" value="ALT_SEQ"/>
    <property type="molecule type" value="Genomic_DNA"/>
</dbReference>
<dbReference type="EMBL" id="M35579">
    <property type="protein sequence ID" value="AAA35243.1"/>
    <property type="molecule type" value="Genomic_DNA"/>
</dbReference>
<dbReference type="RefSeq" id="XP_501284.1">
    <property type="nucleotide sequence ID" value="XM_501284.1"/>
</dbReference>
<dbReference type="SMR" id="P18120"/>
<dbReference type="FunCoup" id="P18120">
    <property type="interactions" value="888"/>
</dbReference>
<dbReference type="STRING" id="284591.P18120"/>
<dbReference type="KEGG" id="yli:2909561"/>
<dbReference type="InParanoid" id="P18120"/>
<dbReference type="OrthoDB" id="111025at4891"/>
<dbReference type="UniPathway" id="UPA00048">
    <property type="reaction ID" value="UER00072"/>
</dbReference>
<dbReference type="Proteomes" id="UP000001300">
    <property type="component" value="Chromosome C"/>
</dbReference>
<dbReference type="GO" id="GO:0005829">
    <property type="term" value="C:cytosol"/>
    <property type="evidence" value="ECO:0000318"/>
    <property type="project" value="GO_Central"/>
</dbReference>
<dbReference type="GO" id="GO:0003862">
    <property type="term" value="F:3-isopropylmalate dehydrogenase activity"/>
    <property type="evidence" value="ECO:0000318"/>
    <property type="project" value="GO_Central"/>
</dbReference>
<dbReference type="GO" id="GO:0000287">
    <property type="term" value="F:magnesium ion binding"/>
    <property type="evidence" value="ECO:0007669"/>
    <property type="project" value="InterPro"/>
</dbReference>
<dbReference type="GO" id="GO:0051287">
    <property type="term" value="F:NAD binding"/>
    <property type="evidence" value="ECO:0007669"/>
    <property type="project" value="InterPro"/>
</dbReference>
<dbReference type="GO" id="GO:0009098">
    <property type="term" value="P:L-leucine biosynthetic process"/>
    <property type="evidence" value="ECO:0000318"/>
    <property type="project" value="GO_Central"/>
</dbReference>
<dbReference type="FunFam" id="3.40.718.10:FF:000006">
    <property type="entry name" value="3-isopropylmalate dehydrogenase"/>
    <property type="match status" value="1"/>
</dbReference>
<dbReference type="Gene3D" id="3.40.718.10">
    <property type="entry name" value="Isopropylmalate Dehydrogenase"/>
    <property type="match status" value="1"/>
</dbReference>
<dbReference type="InterPro" id="IPR019818">
    <property type="entry name" value="IsoCit/isopropylmalate_DH_CS"/>
</dbReference>
<dbReference type="InterPro" id="IPR024084">
    <property type="entry name" value="IsoPropMal-DH-like_dom"/>
</dbReference>
<dbReference type="InterPro" id="IPR004429">
    <property type="entry name" value="Isopropylmalate_DH"/>
</dbReference>
<dbReference type="NCBIfam" id="TIGR00169">
    <property type="entry name" value="leuB"/>
    <property type="match status" value="1"/>
</dbReference>
<dbReference type="PANTHER" id="PTHR42979">
    <property type="entry name" value="3-ISOPROPYLMALATE DEHYDROGENASE"/>
    <property type="match status" value="1"/>
</dbReference>
<dbReference type="PANTHER" id="PTHR42979:SF1">
    <property type="entry name" value="3-ISOPROPYLMALATE DEHYDROGENASE"/>
    <property type="match status" value="1"/>
</dbReference>
<dbReference type="Pfam" id="PF00180">
    <property type="entry name" value="Iso_dh"/>
    <property type="match status" value="1"/>
</dbReference>
<dbReference type="SMART" id="SM01329">
    <property type="entry name" value="Iso_dh"/>
    <property type="match status" value="1"/>
</dbReference>
<dbReference type="SUPFAM" id="SSF53659">
    <property type="entry name" value="Isocitrate/Isopropylmalate dehydrogenase-like"/>
    <property type="match status" value="1"/>
</dbReference>
<dbReference type="PROSITE" id="PS00470">
    <property type="entry name" value="IDH_IMDH"/>
    <property type="match status" value="1"/>
</dbReference>
<proteinExistence type="inferred from homology"/>
<gene>
    <name type="primary">LEU2</name>
    <name type="ordered locus">YALI0C00407g</name>
</gene>
<sequence length="405" mass="43359">MEPETKKTKTDSKKIVLLGGDFCGPEVIAEAVKVLKSVAEASGTEFVFEDRLIGGAAIEKEGEPITDATLDICRKADSIMLGAVGGAANTVWTTPDGRTDVRPEQGLLKLRKDLNLYANLRPCQLLSPKLADLSPIRNVEGTDFIIVRELVGGIYFGERKEDDGSGVASDTETYSVPEVERIARMAAFLALQHNPPLPVWSLDKANVLASSRLWRKTVTRVLKDEFPQLELNHQLIDSAAMILIKQPSKMNGIIITTNMFGDIISDEASVIPGSLGLLPSASLASLPDTNEAFGLYEPCHGSAPDLGKQKVNPIATILSAAMMLKFSLNMKPAGDAVEAAVKESVEAGITTADIGGSSSTSEVGDLLPTRSRSCSRRSKSFLRRIDGRSKLTRLRVGLPAGSASV</sequence>
<comment type="function">
    <text>Catalyzes the oxidation of 3-carboxy-2-hydroxy-4-methylpentanoate (3-isopropylmalate) to 3-carboxy-4-methyl-2-oxopentanoate. The product decarboxylates to 4-methyl-2 oxopentanoate.</text>
</comment>
<comment type="catalytic activity">
    <reaction>
        <text>(2R,3S)-3-isopropylmalate + NAD(+) = 4-methyl-2-oxopentanoate + CO2 + NADH</text>
        <dbReference type="Rhea" id="RHEA:32271"/>
        <dbReference type="ChEBI" id="CHEBI:16526"/>
        <dbReference type="ChEBI" id="CHEBI:17865"/>
        <dbReference type="ChEBI" id="CHEBI:35121"/>
        <dbReference type="ChEBI" id="CHEBI:57540"/>
        <dbReference type="ChEBI" id="CHEBI:57945"/>
        <dbReference type="EC" id="1.1.1.85"/>
    </reaction>
</comment>
<comment type="cofactor">
    <cofactor evidence="1">
        <name>Mg(2+)</name>
        <dbReference type="ChEBI" id="CHEBI:18420"/>
    </cofactor>
    <cofactor evidence="1">
        <name>Mn(2+)</name>
        <dbReference type="ChEBI" id="CHEBI:29035"/>
    </cofactor>
    <text evidence="1">Binds 1 Mg(2+) or Mn(2+) ion per subunit.</text>
</comment>
<comment type="pathway">
    <text>Amino-acid biosynthesis; L-leucine biosynthesis; L-leucine from 3-methyl-2-oxobutanoate: step 3/4.</text>
</comment>
<comment type="subunit">
    <text evidence="1">Homodimer.</text>
</comment>
<comment type="subcellular location">
    <subcellularLocation>
        <location>Cytoplasm</location>
    </subcellularLocation>
</comment>
<comment type="similarity">
    <text evidence="3">Belongs to the isocitrate and isopropylmalate dehydrogenases family.</text>
</comment>
<comment type="sequence caution" evidence="3">
    <conflict type="frameshift">
        <sequence resource="EMBL-CDS" id="CAG81579"/>
    </conflict>
    <text>Defective LEU2 (leu2-270) in genome strain CLIB 122 / E 150.</text>
</comment>
<comment type="sequence caution" evidence="3">
    <conflict type="miscellaneous discrepancy">
        <sequence resource="EMBL-CDS" id="CAG81579"/>
    </conflict>
    <text>Defective LEU2 (leu2-270) in genome strain CLIB 122 / E 150 lacks the central section (positions 43 to 269).</text>
</comment>
<name>LEU3_YARLI</name>
<protein>
    <recommendedName>
        <fullName>3-isopropylmalate dehydrogenase</fullName>
        <shortName>3-IPM-DH</shortName>
        <shortName>IMDH</shortName>
        <ecNumber>1.1.1.85</ecNumber>
    </recommendedName>
    <alternativeName>
        <fullName>Beta-IPM dehydrogenase</fullName>
    </alternativeName>
</protein>
<feature type="chain" id="PRO_0000083621" description="3-isopropylmalate dehydrogenase">
    <location>
        <begin position="1"/>
        <end position="405"/>
    </location>
</feature>
<feature type="region of interest" description="Disordered" evidence="2">
    <location>
        <begin position="352"/>
        <end position="371"/>
    </location>
</feature>
<feature type="binding site" evidence="1">
    <location>
        <begin position="86"/>
        <end position="104"/>
    </location>
    <ligand>
        <name>NAD(+)</name>
        <dbReference type="ChEBI" id="CHEBI:57540"/>
    </ligand>
</feature>
<feature type="binding site" evidence="1">
    <location>
        <position position="111"/>
    </location>
    <ligand>
        <name>substrate</name>
    </ligand>
</feature>
<feature type="binding site" evidence="1">
    <location>
        <position position="121"/>
    </location>
    <ligand>
        <name>substrate</name>
    </ligand>
</feature>
<feature type="binding site" evidence="1">
    <location>
        <position position="148"/>
    </location>
    <ligand>
        <name>substrate</name>
    </ligand>
</feature>
<feature type="binding site" evidence="1">
    <location>
        <position position="237"/>
    </location>
    <ligand>
        <name>Mg(2+)</name>
        <dbReference type="ChEBI" id="CHEBI:18420"/>
    </ligand>
</feature>
<feature type="binding site" evidence="1">
    <location>
        <position position="237"/>
    </location>
    <ligand>
        <name>substrate</name>
    </ligand>
</feature>
<feature type="binding site" evidence="1">
    <location>
        <position position="262"/>
    </location>
    <ligand>
        <name>Mg(2+)</name>
        <dbReference type="ChEBI" id="CHEBI:18420"/>
    </ligand>
</feature>
<feature type="binding site" evidence="1">
    <location>
        <position position="266"/>
    </location>
    <ligand>
        <name>Mg(2+)</name>
        <dbReference type="ChEBI" id="CHEBI:18420"/>
    </ligand>
</feature>
<feature type="binding site" evidence="1">
    <location>
        <begin position="301"/>
        <end position="312"/>
    </location>
    <ligand>
        <name>NAD(+)</name>
        <dbReference type="ChEBI" id="CHEBI:57540"/>
    </ligand>
</feature>
<feature type="site" description="Important for catalysis" evidence="1">
    <location>
        <position position="155"/>
    </location>
</feature>
<feature type="site" description="Important for catalysis" evidence="1">
    <location>
        <position position="204"/>
    </location>
</feature>
<keyword id="KW-0028">Amino-acid biosynthesis</keyword>
<keyword id="KW-0100">Branched-chain amino acid biosynthesis</keyword>
<keyword id="KW-0963">Cytoplasm</keyword>
<keyword id="KW-0432">Leucine biosynthesis</keyword>
<keyword id="KW-0460">Magnesium</keyword>
<keyword id="KW-0464">Manganese</keyword>
<keyword id="KW-0479">Metal-binding</keyword>
<keyword id="KW-0520">NAD</keyword>
<keyword id="KW-0560">Oxidoreductase</keyword>
<keyword id="KW-1185">Reference proteome</keyword>
<reference key="1">
    <citation type="journal article" date="1987" name="Curr. Genet.">
        <title>The Yarrowia lipolytica LEU2 gene.</title>
        <authorList>
            <person name="Davidow L.S."/>
            <person name="Kaczmarek F.S."/>
            <person name="Dezeeuw J.R."/>
            <person name="Colon S.W."/>
            <person name="Lauth M.R."/>
            <person name="Pereira D.A."/>
            <person name="Franke A.E."/>
        </authorList>
    </citation>
    <scope>NUCLEOTIDE SEQUENCE [GENOMIC DNA]</scope>
</reference>
<reference key="2">
    <citation type="submission" date="2000-04" db="EMBL/GenBank/DDBJ databases">
        <title>Yarrowia lipolytica LEU2 region.</title>
        <authorList>
            <person name="Rojas Quijano R."/>
            <person name="Lepingle A."/>
            <person name="Gaillardin C."/>
        </authorList>
    </citation>
    <scope>NUCLEOTIDE SEQUENCE [GENOMIC DNA]</scope>
</reference>
<reference key="3">
    <citation type="journal article" date="2004" name="Nature">
        <title>Genome evolution in yeasts.</title>
        <authorList>
            <person name="Dujon B."/>
            <person name="Sherman D."/>
            <person name="Fischer G."/>
            <person name="Durrens P."/>
            <person name="Casaregola S."/>
            <person name="Lafontaine I."/>
            <person name="de Montigny J."/>
            <person name="Marck C."/>
            <person name="Neuveglise C."/>
            <person name="Talla E."/>
            <person name="Goffard N."/>
            <person name="Frangeul L."/>
            <person name="Aigle M."/>
            <person name="Anthouard V."/>
            <person name="Babour A."/>
            <person name="Barbe V."/>
            <person name="Barnay S."/>
            <person name="Blanchin S."/>
            <person name="Beckerich J.-M."/>
            <person name="Beyne E."/>
            <person name="Bleykasten C."/>
            <person name="Boisrame A."/>
            <person name="Boyer J."/>
            <person name="Cattolico L."/>
            <person name="Confanioleri F."/>
            <person name="de Daruvar A."/>
            <person name="Despons L."/>
            <person name="Fabre E."/>
            <person name="Fairhead C."/>
            <person name="Ferry-Dumazet H."/>
            <person name="Groppi A."/>
            <person name="Hantraye F."/>
            <person name="Hennequin C."/>
            <person name="Jauniaux N."/>
            <person name="Joyet P."/>
            <person name="Kachouri R."/>
            <person name="Kerrest A."/>
            <person name="Koszul R."/>
            <person name="Lemaire M."/>
            <person name="Lesur I."/>
            <person name="Ma L."/>
            <person name="Muller H."/>
            <person name="Nicaud J.-M."/>
            <person name="Nikolski M."/>
            <person name="Oztas S."/>
            <person name="Ozier-Kalogeropoulos O."/>
            <person name="Pellenz S."/>
            <person name="Potier S."/>
            <person name="Richard G.-F."/>
            <person name="Straub M.-L."/>
            <person name="Suleau A."/>
            <person name="Swennen D."/>
            <person name="Tekaia F."/>
            <person name="Wesolowski-Louvel M."/>
            <person name="Westhof E."/>
            <person name="Wirth B."/>
            <person name="Zeniou-Meyer M."/>
            <person name="Zivanovic Y."/>
            <person name="Bolotin-Fukuhara M."/>
            <person name="Thierry A."/>
            <person name="Bouchier C."/>
            <person name="Caudron B."/>
            <person name="Scarpelli C."/>
            <person name="Gaillardin C."/>
            <person name="Weissenbach J."/>
            <person name="Wincker P."/>
            <person name="Souciet J.-L."/>
        </authorList>
    </citation>
    <scope>NUCLEOTIDE SEQUENCE [LARGE SCALE GENOMIC DNA]</scope>
    <source>
        <strain>CLIB 122 / E 150</strain>
    </source>
</reference>
<reference key="4">
    <citation type="journal article" date="1987" name="Curr. Genet.">
        <title>LEU2 directed expression of beta-galactosidase activity and phleomycin resistance in Yarrowia lipolytica.</title>
        <authorList>
            <person name="Gaillardin C."/>
            <person name="Ribet A.M."/>
        </authorList>
    </citation>
    <scope>NUCLEOTIDE SEQUENCE [GENOMIC DNA] OF 1-226</scope>
</reference>
<organism>
    <name type="scientific">Yarrowia lipolytica (strain CLIB 122 / E 150)</name>
    <name type="common">Yeast</name>
    <name type="synonym">Candida lipolytica</name>
    <dbReference type="NCBI Taxonomy" id="284591"/>
    <lineage>
        <taxon>Eukaryota</taxon>
        <taxon>Fungi</taxon>
        <taxon>Dikarya</taxon>
        <taxon>Ascomycota</taxon>
        <taxon>Saccharomycotina</taxon>
        <taxon>Dipodascomycetes</taxon>
        <taxon>Dipodascales</taxon>
        <taxon>Dipodascales incertae sedis</taxon>
        <taxon>Yarrowia</taxon>
    </lineage>
</organism>
<evidence type="ECO:0000250" key="1"/>
<evidence type="ECO:0000256" key="2">
    <source>
        <dbReference type="SAM" id="MobiDB-lite"/>
    </source>
</evidence>
<evidence type="ECO:0000305" key="3"/>
<accession>P18120</accession>
<accession>Q6CDH8</accession>